<protein>
    <recommendedName>
        <fullName>Vacuolar protein sorting/targeting protein 10</fullName>
    </recommendedName>
    <alternativeName>
        <fullName>Carboxypeptidase Y receptor</fullName>
        <shortName>CPY receptor</shortName>
    </alternativeName>
    <alternativeName>
        <fullName>Sortilin VPS10</fullName>
    </alternativeName>
    <alternativeName>
        <fullName>Vacuolar carboxypeptidase sorting receptor VPS10</fullName>
    </alternativeName>
</protein>
<name>VPS10_PYRO7</name>
<evidence type="ECO:0000250" key="1"/>
<evidence type="ECO:0000255" key="2"/>
<evidence type="ECO:0000256" key="3">
    <source>
        <dbReference type="SAM" id="MobiDB-lite"/>
    </source>
</evidence>
<evidence type="ECO:0000305" key="4"/>
<proteinExistence type="inferred from homology"/>
<dbReference type="EMBL" id="CM001235">
    <property type="protein sequence ID" value="EHA48969.1"/>
    <property type="molecule type" value="Genomic_DNA"/>
</dbReference>
<dbReference type="RefSeq" id="XP_003718553.1">
    <property type="nucleotide sequence ID" value="XM_003718505.1"/>
</dbReference>
<dbReference type="SMR" id="A4RF05"/>
<dbReference type="FunCoup" id="A4RF05">
    <property type="interactions" value="182"/>
</dbReference>
<dbReference type="STRING" id="242507.A4RF05"/>
<dbReference type="GlyCosmos" id="A4RF05">
    <property type="glycosylation" value="7 sites, No reported glycans"/>
</dbReference>
<dbReference type="EnsemblFungi" id="MGG_00506T0">
    <property type="protein sequence ID" value="MGG_00506T0"/>
    <property type="gene ID" value="MGG_00506"/>
</dbReference>
<dbReference type="GeneID" id="2674786"/>
<dbReference type="KEGG" id="mgr:MGG_00506"/>
<dbReference type="VEuPathDB" id="FungiDB:MGG_00506"/>
<dbReference type="eggNOG" id="KOG3511">
    <property type="taxonomic scope" value="Eukaryota"/>
</dbReference>
<dbReference type="HOGENOM" id="CLU_000700_0_0_1"/>
<dbReference type="InParanoid" id="A4RF05"/>
<dbReference type="OMA" id="ATMSEFI"/>
<dbReference type="OrthoDB" id="443634at2759"/>
<dbReference type="Proteomes" id="UP000009058">
    <property type="component" value="Chromosome 5"/>
</dbReference>
<dbReference type="GO" id="GO:0005829">
    <property type="term" value="C:cytosol"/>
    <property type="evidence" value="ECO:0007669"/>
    <property type="project" value="GOC"/>
</dbReference>
<dbReference type="GO" id="GO:0005794">
    <property type="term" value="C:Golgi apparatus"/>
    <property type="evidence" value="ECO:0007669"/>
    <property type="project" value="UniProtKB-SubCell"/>
</dbReference>
<dbReference type="GO" id="GO:0016020">
    <property type="term" value="C:membrane"/>
    <property type="evidence" value="ECO:0007669"/>
    <property type="project" value="UniProtKB-KW"/>
</dbReference>
<dbReference type="GO" id="GO:0006895">
    <property type="term" value="P:Golgi to endosome transport"/>
    <property type="evidence" value="ECO:0007669"/>
    <property type="project" value="TreeGrafter"/>
</dbReference>
<dbReference type="GO" id="GO:0006896">
    <property type="term" value="P:Golgi to vacuole transport"/>
    <property type="evidence" value="ECO:0007669"/>
    <property type="project" value="TreeGrafter"/>
</dbReference>
<dbReference type="GO" id="GO:0006623">
    <property type="term" value="P:protein targeting to vacuole"/>
    <property type="evidence" value="ECO:0007669"/>
    <property type="project" value="TreeGrafter"/>
</dbReference>
<dbReference type="FunFam" id="3.30.60.270:FF:000005">
    <property type="entry name" value="Sortilin"/>
    <property type="match status" value="2"/>
</dbReference>
<dbReference type="Gene3D" id="2.10.70.80">
    <property type="match status" value="2"/>
</dbReference>
<dbReference type="Gene3D" id="3.30.60.270">
    <property type="match status" value="2"/>
</dbReference>
<dbReference type="Gene3D" id="2.130.10.10">
    <property type="entry name" value="YVTN repeat-like/Quinoprotein amine dehydrogenase"/>
    <property type="match status" value="2"/>
</dbReference>
<dbReference type="InterPro" id="IPR031777">
    <property type="entry name" value="Sortilin_C"/>
</dbReference>
<dbReference type="InterPro" id="IPR031778">
    <property type="entry name" value="Sortilin_N"/>
</dbReference>
<dbReference type="InterPro" id="IPR006581">
    <property type="entry name" value="VPS10"/>
</dbReference>
<dbReference type="InterPro" id="IPR050310">
    <property type="entry name" value="VPS10-sortilin"/>
</dbReference>
<dbReference type="InterPro" id="IPR015943">
    <property type="entry name" value="WD40/YVTN_repeat-like_dom_sf"/>
</dbReference>
<dbReference type="PANTHER" id="PTHR12106">
    <property type="entry name" value="SORTILIN RELATED"/>
    <property type="match status" value="1"/>
</dbReference>
<dbReference type="PANTHER" id="PTHR12106:SF27">
    <property type="entry name" value="SORTILIN-RELATED RECEPTOR"/>
    <property type="match status" value="1"/>
</dbReference>
<dbReference type="Pfam" id="PF15902">
    <property type="entry name" value="Sortilin-Vps10"/>
    <property type="match status" value="2"/>
</dbReference>
<dbReference type="Pfam" id="PF15901">
    <property type="entry name" value="Sortilin_C"/>
    <property type="match status" value="2"/>
</dbReference>
<dbReference type="SMART" id="SM00602">
    <property type="entry name" value="VPS10"/>
    <property type="match status" value="2"/>
</dbReference>
<dbReference type="SUPFAM" id="SSF110296">
    <property type="entry name" value="Oligoxyloglucan reducing end-specific cellobiohydrolase"/>
    <property type="match status" value="2"/>
</dbReference>
<gene>
    <name type="primary">VPS10</name>
    <name type="ORF">MGG_00506</name>
</gene>
<comment type="function">
    <text evidence="1">Functions as a sorting receptor in the Golgi compartment required for the intracellular sorting and delivery of soluble vacuolar proteins, like carboxypeptidase Y (CPY) and proteinase A. Executes multiple rounds of sorting by cycling between the late Golgi and a prevacuolar endosome-like compartment (By similarity).</text>
</comment>
<comment type="subcellular location">
    <subcellularLocation>
        <location evidence="1">Golgi apparatus</location>
        <location evidence="1">trans-Golgi network membrane</location>
        <topology evidence="1">Multi-pass membrane protein</topology>
    </subcellularLocation>
    <subcellularLocation>
        <location evidence="1">Prevacuolar compartment membrane</location>
        <topology evidence="1">Multi-pass membrane protein</topology>
    </subcellularLocation>
    <text evidence="1">Cycles between the Golgi apparatus and the prevacuolar compartment.</text>
</comment>
<comment type="similarity">
    <text evidence="4">Belongs to the VPS10-related sortilin family.</text>
</comment>
<organism>
    <name type="scientific">Pyricularia oryzae (strain 70-15 / ATCC MYA-4617 / FGSC 8958)</name>
    <name type="common">Rice blast fungus</name>
    <name type="synonym">Magnaporthe oryzae</name>
    <dbReference type="NCBI Taxonomy" id="242507"/>
    <lineage>
        <taxon>Eukaryota</taxon>
        <taxon>Fungi</taxon>
        <taxon>Dikarya</taxon>
        <taxon>Ascomycota</taxon>
        <taxon>Pezizomycotina</taxon>
        <taxon>Sordariomycetes</taxon>
        <taxon>Sordariomycetidae</taxon>
        <taxon>Magnaporthales</taxon>
        <taxon>Pyriculariaceae</taxon>
        <taxon>Pyricularia</taxon>
    </lineage>
</organism>
<accession>A4RF05</accession>
<accession>G4NBR1</accession>
<reference key="1">
    <citation type="journal article" date="2005" name="Nature">
        <title>The genome sequence of the rice blast fungus Magnaporthe grisea.</title>
        <authorList>
            <person name="Dean R.A."/>
            <person name="Talbot N.J."/>
            <person name="Ebbole D.J."/>
            <person name="Farman M.L."/>
            <person name="Mitchell T.K."/>
            <person name="Orbach M.J."/>
            <person name="Thon M.R."/>
            <person name="Kulkarni R."/>
            <person name="Xu J.-R."/>
            <person name="Pan H."/>
            <person name="Read N.D."/>
            <person name="Lee Y.-H."/>
            <person name="Carbone I."/>
            <person name="Brown D."/>
            <person name="Oh Y.Y."/>
            <person name="Donofrio N."/>
            <person name="Jeong J.S."/>
            <person name="Soanes D.M."/>
            <person name="Djonovic S."/>
            <person name="Kolomiets E."/>
            <person name="Rehmeyer C."/>
            <person name="Li W."/>
            <person name="Harding M."/>
            <person name="Kim S."/>
            <person name="Lebrun M.-H."/>
            <person name="Bohnert H."/>
            <person name="Coughlan S."/>
            <person name="Butler J."/>
            <person name="Calvo S.E."/>
            <person name="Ma L.-J."/>
            <person name="Nicol R."/>
            <person name="Purcell S."/>
            <person name="Nusbaum C."/>
            <person name="Galagan J.E."/>
            <person name="Birren B.W."/>
        </authorList>
    </citation>
    <scope>NUCLEOTIDE SEQUENCE [LARGE SCALE GENOMIC DNA]</scope>
    <source>
        <strain>70-15 / ATCC MYA-4617 / FGSC 8958</strain>
    </source>
</reference>
<sequence length="1515" mass="169648">MRLGAALQAAALLTASLWSHPLLAASDDPAFKTTKLDHYPFNLNYFEDSDIVLYQDEARGTISRSEDAGATWTLVKDIEEGKAFQLVMHPFDRKRAYVLTSPGIHHFRTHDQGRTWQDFLADTEMTMFRLDILSFHATDPDRIIFNGMDCKEGKFFCEEVAMYTTDGFTSDAKFLRGSTSGCSWAKSSKLFTTGQDDLDKNRILCVVRDHFSPLKQDQRLMISDNFFSAKDAGGVIQEFEPNLDMTRPIQGVVNVAVVKKYLLVAASSMNTDEMSLFVSDDTLKWHRAMFPTDHKINQESYTVLESTEYSIQVDVMTTHPSNPMGVMYTSNSNGTFFTRNIEHTNRNHRGHVDFEKITGVQGIFMVNKVDNAEEVEKDRRGKKKIVSEITFDDGRTFEPIHADKERLHLHSVTELINAGRVFSSPAPGLVMGNGNTGKHLESWKDASLYISDDAGLTWIKGPNGPHKYEFGDQGSVLLAVMQAEEVDEVKYSLNHGKDWKTAKLPDDLKVKPIILTTTQDSTSLKFILIGEGKGRDEFHIVAIDFSSMHEATCKDSDMEDWYARVDDKGKATCLMGHTQKYRRRKKDADCFVKQEFKDPVPETKDCECSDQDFECDYNFKRDGKECVLVGTVVAPDGACKNAGPDDTFKGSSGWRLIPGNTCKRASGAQKDDLVDRKCKETSEPTPSEPSGNISTTPHNFSGDWLDFEKHYLEKGAESMDENEVVIARPINAQNAGQIFLTKDHGKTWHMPEALKDKNIWGIVTHQYFKEMAFFVQDTGSVIYTVDHGEHFHDFKAPGNGIDPDTKPLVFHPDHKDWMIWIGKKCEENTCYREASFSQDRGDNWKSIARYVYKCEFTGSSSYKFRSQDQIICSIQSREGNEKNIPFDLVSSNDLFKTSEVRQKNIKDFATMAEFIVVAAEDPERKSLKAFASLDGDSYAATRFPSNLDVKEERAFTILDSSTHAVKLFVPSPAQKDRCVGSIAKSNSNGTDYVVSITGVNCDENYFVDFEKMLTLEGVILVNIVANRENTNEPKKRRSLISHSDGATWSYLPPPRVDAEGKNYPCTSSDNGDENCALHIHGYTERKDHGKTYSSAGAVGLMFGVGNVGSTLGDIKDADTFLTTDAGISWKSVKKGAWRWAYGDQGSILMLVPSTKTKMVSYTTDEGETWNDHNFTDEPVDVLDMTTVSSGGSRNFLLWCRRSDKTVFAVNLDLTGLANTACKQVDDNDSESDYYAWSPSHPLRPDDCLFGHKSYYLRKKTDRKCYNKHKITPVFKMDVCECTREDFECDYNYELEGVGRNCVLAKGAQPMSREDWCSAHPKESTWYEPSGFRRIPISTCKEGRVFDNYTTSWPCPGHEEEYERQHGGPGGFTIFLIVILCVGAAGAVGVWVHRRWESGGFGQIRLGEQSSSGISFLDPDSPWVRYPVVAVSATVALVGALPLLVGALWRTTKTTVERWGIFGGVGRGTYGSLGLGGGSGARRFTTRDSFARGRSDYAGIDEDEGELLGDDSDEEV</sequence>
<feature type="signal peptide" evidence="2">
    <location>
        <begin position="1"/>
        <end position="24"/>
    </location>
</feature>
<feature type="chain" id="PRO_0000407523" description="Vacuolar protein sorting/targeting protein 10">
    <location>
        <begin position="25"/>
        <end position="1515"/>
    </location>
</feature>
<feature type="topological domain" description="Lumenal" evidence="2">
    <location>
        <begin position="25"/>
        <end position="1370"/>
    </location>
</feature>
<feature type="transmembrane region" description="Helical" evidence="2">
    <location>
        <begin position="1371"/>
        <end position="1391"/>
    </location>
</feature>
<feature type="topological domain" description="Cytoplasmic" evidence="2">
    <location>
        <begin position="1392"/>
        <end position="1426"/>
    </location>
</feature>
<feature type="transmembrane region" description="Helical" evidence="2">
    <location>
        <begin position="1427"/>
        <end position="1447"/>
    </location>
</feature>
<feature type="topological domain" description="Lumenal" evidence="2">
    <location>
        <begin position="1448"/>
        <end position="1515"/>
    </location>
</feature>
<feature type="repeat" description="BNR 1">
    <location>
        <begin position="64"/>
        <end position="73"/>
    </location>
</feature>
<feature type="repeat" description="BNR 2">
    <location>
        <begin position="107"/>
        <end position="117"/>
    </location>
</feature>
<feature type="repeat" description="BNR 3">
    <location>
        <begin position="449"/>
        <end position="458"/>
    </location>
</feature>
<feature type="repeat" description="BNR 4">
    <location>
        <begin position="491"/>
        <end position="500"/>
    </location>
</feature>
<feature type="repeat" description="BNR 5">
    <location>
        <begin position="739"/>
        <end position="749"/>
    </location>
</feature>
<feature type="repeat" description="BNR 6">
    <location>
        <begin position="836"/>
        <end position="845"/>
    </location>
</feature>
<feature type="repeat" description="BNR 7">
    <location>
        <begin position="1040"/>
        <end position="1050"/>
    </location>
</feature>
<feature type="repeat" description="BNR 8">
    <location>
        <begin position="1120"/>
        <end position="1130"/>
    </location>
</feature>
<feature type="repeat" description="BNR 9">
    <location>
        <begin position="1161"/>
        <end position="1170"/>
    </location>
</feature>
<feature type="region of interest" description="Disordered" evidence="3">
    <location>
        <begin position="673"/>
        <end position="698"/>
    </location>
</feature>
<feature type="region of interest" description="Disordered" evidence="3">
    <location>
        <begin position="1494"/>
        <end position="1515"/>
    </location>
</feature>
<feature type="compositionally biased region" description="Basic and acidic residues" evidence="3">
    <location>
        <begin position="673"/>
        <end position="682"/>
    </location>
</feature>
<feature type="compositionally biased region" description="Polar residues" evidence="3">
    <location>
        <begin position="683"/>
        <end position="698"/>
    </location>
</feature>
<feature type="compositionally biased region" description="Acidic residues" evidence="3">
    <location>
        <begin position="1498"/>
        <end position="1515"/>
    </location>
</feature>
<feature type="glycosylation site" description="N-linked (GlcNAc...) asparagine" evidence="2">
    <location>
        <position position="333"/>
    </location>
</feature>
<feature type="glycosylation site" description="N-linked (GlcNAc...) asparagine" evidence="2">
    <location>
        <position position="692"/>
    </location>
</feature>
<feature type="glycosylation site" description="N-linked (GlcNAc...) asparagine" evidence="2">
    <location>
        <position position="699"/>
    </location>
</feature>
<feature type="glycosylation site" description="N-linked (GlcNAc...) asparagine" evidence="2">
    <location>
        <position position="988"/>
    </location>
</feature>
<feature type="glycosylation site" description="N-linked (GlcNAc...) asparagine" evidence="2">
    <location>
        <position position="1173"/>
    </location>
</feature>
<feature type="glycosylation site" description="N-linked (GlcNAc...) asparagine" evidence="2">
    <location>
        <position position="1227"/>
    </location>
</feature>
<feature type="glycosylation site" description="N-linked (GlcNAc...) asparagine" evidence="2">
    <location>
        <position position="1347"/>
    </location>
</feature>
<keyword id="KW-0325">Glycoprotein</keyword>
<keyword id="KW-0333">Golgi apparatus</keyword>
<keyword id="KW-0472">Membrane</keyword>
<keyword id="KW-0653">Protein transport</keyword>
<keyword id="KW-0675">Receptor</keyword>
<keyword id="KW-1185">Reference proteome</keyword>
<keyword id="KW-0677">Repeat</keyword>
<keyword id="KW-0732">Signal</keyword>
<keyword id="KW-0812">Transmembrane</keyword>
<keyword id="KW-1133">Transmembrane helix</keyword>
<keyword id="KW-0813">Transport</keyword>